<proteinExistence type="predicted"/>
<sequence>MQVLWKKFQKKLIDANLAECGIEIGVPNVGYNYTVFQKSVLHIVTQGEGTFSYAGETYHLTAGDIFLLERGMEVEYKPSFSNPWTYYWVGMNGKQILNYLSRCSIVDSHVILGQDTTDIKNIIQLICKLSQSIESNNSNDILIMQYLYQLVYTLQEKFPKIFSVQVDIVNEDIQHAVDFINTNYQKHITVEDVAKSVNITRSHLYKLFKKNLGCSPKEYLTYIRMYHASQLLIHTSTLISDISRQVGYKDPLLFSKNFTKHFEISASEYRHHFSINNKQ</sequence>
<accession>O33813</accession>
<feature type="chain" id="PRO_0000194528" description="Lactose operon transcription activator">
    <location>
        <begin position="1"/>
        <end position="279"/>
    </location>
</feature>
<feature type="domain" description="HTH araC/xylS-type" evidence="1">
    <location>
        <begin position="174"/>
        <end position="272"/>
    </location>
</feature>
<feature type="DNA-binding region" description="H-T-H motif" evidence="1">
    <location>
        <begin position="191"/>
        <end position="212"/>
    </location>
</feature>
<feature type="DNA-binding region" description="H-T-H motif" evidence="1">
    <location>
        <begin position="239"/>
        <end position="262"/>
    </location>
</feature>
<comment type="function">
    <text>Transcriptional regulator of the lacPH genes for lactose utilization.</text>
</comment>
<protein>
    <recommendedName>
        <fullName>Lactose operon transcription activator</fullName>
    </recommendedName>
</protein>
<reference key="1">
    <citation type="journal article" date="1998" name="J. Bacteriol.">
        <title>Regulation of lactose utilization genes in Staphylococcus xylosus.</title>
        <authorList>
            <person name="Bassias J."/>
            <person name="Brueckner R."/>
        </authorList>
    </citation>
    <scope>NUCLEOTIDE SEQUENCE [GENOMIC DNA]</scope>
    <source>
        <strain>DSM 20267 / Isolate C2A</strain>
    </source>
</reference>
<organism>
    <name type="scientific">Staphylococcus xylosus</name>
    <dbReference type="NCBI Taxonomy" id="1288"/>
    <lineage>
        <taxon>Bacteria</taxon>
        <taxon>Bacillati</taxon>
        <taxon>Bacillota</taxon>
        <taxon>Bacilli</taxon>
        <taxon>Bacillales</taxon>
        <taxon>Staphylococcaceae</taxon>
        <taxon>Staphylococcus</taxon>
    </lineage>
</organism>
<dbReference type="EMBL" id="Y14599">
    <property type="protein sequence ID" value="CAA74935.1"/>
    <property type="molecule type" value="Genomic_DNA"/>
</dbReference>
<dbReference type="RefSeq" id="WP_042361763.1">
    <property type="nucleotide sequence ID" value="NZ_CP008724.1"/>
</dbReference>
<dbReference type="SMR" id="O33813"/>
<dbReference type="STRING" id="1288.AWC37_11785"/>
<dbReference type="GeneID" id="45495725"/>
<dbReference type="KEGG" id="sxl:SXYLSMQ121_0082"/>
<dbReference type="KEGG" id="sxo:SXYL_00082"/>
<dbReference type="eggNOG" id="COG2207">
    <property type="taxonomic scope" value="Bacteria"/>
</dbReference>
<dbReference type="GO" id="GO:0003700">
    <property type="term" value="F:DNA-binding transcription factor activity"/>
    <property type="evidence" value="ECO:0007669"/>
    <property type="project" value="InterPro"/>
</dbReference>
<dbReference type="GO" id="GO:0043565">
    <property type="term" value="F:sequence-specific DNA binding"/>
    <property type="evidence" value="ECO:0007669"/>
    <property type="project" value="InterPro"/>
</dbReference>
<dbReference type="CDD" id="cd06986">
    <property type="entry name" value="cupin_MmsR-like_N"/>
    <property type="match status" value="1"/>
</dbReference>
<dbReference type="Gene3D" id="1.10.10.60">
    <property type="entry name" value="Homeodomain-like"/>
    <property type="match status" value="2"/>
</dbReference>
<dbReference type="Gene3D" id="2.60.120.280">
    <property type="entry name" value="Regulatory protein AraC"/>
    <property type="match status" value="1"/>
</dbReference>
<dbReference type="InterPro" id="IPR003313">
    <property type="entry name" value="AraC-bd"/>
</dbReference>
<dbReference type="InterPro" id="IPR009057">
    <property type="entry name" value="Homeodomain-like_sf"/>
</dbReference>
<dbReference type="InterPro" id="IPR037923">
    <property type="entry name" value="HTH-like"/>
</dbReference>
<dbReference type="InterPro" id="IPR018060">
    <property type="entry name" value="HTH_AraC"/>
</dbReference>
<dbReference type="InterPro" id="IPR018062">
    <property type="entry name" value="HTH_AraC-typ_CS"/>
</dbReference>
<dbReference type="PANTHER" id="PTHR43280">
    <property type="entry name" value="ARAC-FAMILY TRANSCRIPTIONAL REGULATOR"/>
    <property type="match status" value="1"/>
</dbReference>
<dbReference type="PANTHER" id="PTHR43280:SF30">
    <property type="entry name" value="MMSAB OPERON REGULATORY PROTEIN"/>
    <property type="match status" value="1"/>
</dbReference>
<dbReference type="Pfam" id="PF02311">
    <property type="entry name" value="AraC_binding"/>
    <property type="match status" value="1"/>
</dbReference>
<dbReference type="Pfam" id="PF12833">
    <property type="entry name" value="HTH_18"/>
    <property type="match status" value="1"/>
</dbReference>
<dbReference type="SMART" id="SM00342">
    <property type="entry name" value="HTH_ARAC"/>
    <property type="match status" value="1"/>
</dbReference>
<dbReference type="SUPFAM" id="SSF46689">
    <property type="entry name" value="Homeodomain-like"/>
    <property type="match status" value="2"/>
</dbReference>
<dbReference type="SUPFAM" id="SSF51215">
    <property type="entry name" value="Regulatory protein AraC"/>
    <property type="match status" value="1"/>
</dbReference>
<dbReference type="PROSITE" id="PS00041">
    <property type="entry name" value="HTH_ARAC_FAMILY_1"/>
    <property type="match status" value="1"/>
</dbReference>
<dbReference type="PROSITE" id="PS01124">
    <property type="entry name" value="HTH_ARAC_FAMILY_2"/>
    <property type="match status" value="1"/>
</dbReference>
<evidence type="ECO:0000255" key="1">
    <source>
        <dbReference type="PROSITE-ProRule" id="PRU00593"/>
    </source>
</evidence>
<gene>
    <name type="primary">lacR</name>
</gene>
<name>LACR_STAXY</name>
<keyword id="KW-0010">Activator</keyword>
<keyword id="KW-0238">DNA-binding</keyword>
<keyword id="KW-0804">Transcription</keyword>
<keyword id="KW-0805">Transcription regulation</keyword>